<keyword id="KW-0158">Chromosome</keyword>
<keyword id="KW-0968">Cytoplasmic vesicle</keyword>
<keyword id="KW-0458">Lysosome</keyword>
<keyword id="KW-0539">Nucleus</keyword>
<keyword id="KW-0675">Receptor</keyword>
<keyword id="KW-1185">Reference proteome</keyword>
<keyword id="KW-0832">Ubl conjugation</keyword>
<gene>
    <name evidence="16" type="primary">Ncoa4</name>
    <name evidence="7" type="synonym">Rfg</name>
</gene>
<evidence type="ECO:0000250" key="1">
    <source>
        <dbReference type="UniProtKB" id="Q13772"/>
    </source>
</evidence>
<evidence type="ECO:0000269" key="2">
    <source>
    </source>
</evidence>
<evidence type="ECO:0000269" key="3">
    <source>
    </source>
</evidence>
<evidence type="ECO:0000269" key="4">
    <source>
    </source>
</evidence>
<evidence type="ECO:0000269" key="5">
    <source>
    </source>
</evidence>
<evidence type="ECO:0000305" key="6"/>
<evidence type="ECO:0000312" key="7">
    <source>
        <dbReference type="EMBL" id="AAD43136.1"/>
    </source>
</evidence>
<evidence type="ECO:0000312" key="8">
    <source>
        <dbReference type="EMBL" id="AAH85086.1"/>
    </source>
</evidence>
<evidence type="ECO:0000312" key="9">
    <source>
        <dbReference type="EMBL" id="BAE26774.1"/>
    </source>
</evidence>
<evidence type="ECO:0000312" key="10">
    <source>
        <dbReference type="EMBL" id="BAE26782.1"/>
    </source>
</evidence>
<evidence type="ECO:0000312" key="11">
    <source>
        <dbReference type="EMBL" id="BAE27129.1"/>
    </source>
</evidence>
<evidence type="ECO:0000312" key="12">
    <source>
        <dbReference type="EMBL" id="BAE27214.1"/>
    </source>
</evidence>
<evidence type="ECO:0000312" key="13">
    <source>
        <dbReference type="EMBL" id="BAE27292.1"/>
    </source>
</evidence>
<evidence type="ECO:0000312" key="14">
    <source>
        <dbReference type="EMBL" id="BAE27329.1"/>
    </source>
</evidence>
<evidence type="ECO:0000312" key="15">
    <source>
        <dbReference type="EMBL" id="BAE27696.1"/>
    </source>
</evidence>
<evidence type="ECO:0000312" key="16">
    <source>
        <dbReference type="MGI" id="MGI:1350932"/>
    </source>
</evidence>
<evidence type="ECO:0000312" key="17">
    <source>
        <dbReference type="Proteomes" id="UP000000589"/>
    </source>
</evidence>
<protein>
    <recommendedName>
        <fullName evidence="16">Nuclear receptor coactivator 4</fullName>
        <shortName evidence="6">NCoA-4</shortName>
    </recommendedName>
    <alternativeName>
        <fullName evidence="6">Androgen receptor coactivator protein</fullName>
    </alternativeName>
    <alternativeName>
        <fullName evidence="6">Ferritin cargo receptor NCOA4</fullName>
    </alternativeName>
</protein>
<organism evidence="17">
    <name type="scientific">Mus musculus</name>
    <name type="common">Mouse</name>
    <dbReference type="NCBI Taxonomy" id="10090"/>
    <lineage>
        <taxon>Eukaryota</taxon>
        <taxon>Metazoa</taxon>
        <taxon>Chordata</taxon>
        <taxon>Craniata</taxon>
        <taxon>Vertebrata</taxon>
        <taxon>Euteleostomi</taxon>
        <taxon>Mammalia</taxon>
        <taxon>Eutheria</taxon>
        <taxon>Euarchontoglires</taxon>
        <taxon>Glires</taxon>
        <taxon>Rodentia</taxon>
        <taxon>Myomorpha</taxon>
        <taxon>Muroidea</taxon>
        <taxon>Muridae</taxon>
        <taxon>Murinae</taxon>
        <taxon>Mus</taxon>
        <taxon>Mus</taxon>
    </lineage>
</organism>
<sequence length="625" mass="70381">MNTSLEQSGCYSNRETLLRCSDARRELELAIGGVLRAEQQIKDNLREVKAQIHSCISRHLECLRSREVWLNEQVDLIYQLKEETLQQQAQQLYWLMGQFNCLIHQLEYTQNKDLANQVSVCLERLGSLALKPEDSTVLLFEADTSALRQTITTFGSLKTIQIPEHLMAHASSSSIGPFLEKRGYIQVPEQKSASSGTAVSLSEWLLVSKPAIGLQAPYVPSTNPQDWLIPKQTSENSQTSARACSFFSDAWGNLKGLENWLLNSHQQEIAGKPSSSKCNSHCSTSSFSPEAEKAEDVELLDQDELDLSDWLVTPQEPCELEKPVDGSWETSEKFKLLFQVFREPYNVSDWLVKPDSCTNCQGNQPRGVEIENLGNLKCLNDHLEAKKSVSVPGATISDGWLAQNHQDTWKVEEVCKANEPCTSFAECVCDDNCEKEAMYKWLLKKGGKDKNGMPMEPKSEPEKHRESLTLWLCPSRNELTEQAKAPKAMAPARIADSFHVIKNSSLSEWLMGPTCKGGPKDVPNTEERAGKEMLQSSMATSWCPFNTADWVLPGKKVGSLSQFPSGEDKWLLRKKAQEAFLNSPLQEERNFRPDCYGLPAVCDLFACMQLKVDKEKWLYRTPLQM</sequence>
<accession>Q5U4H9</accession>
<accession>Q3UI10</accession>
<accession>Q3UJ26</accession>
<accession>Q3UJ63</accession>
<accession>Q3UKL9</accession>
<accession>Q9WV42</accession>
<dbReference type="EMBL" id="AF159461">
    <property type="protein sequence ID" value="AAD43136.1"/>
    <property type="molecule type" value="mRNA"/>
</dbReference>
<dbReference type="EMBL" id="AK145945">
    <property type="protein sequence ID" value="BAE26774.1"/>
    <property type="molecule type" value="mRNA"/>
</dbReference>
<dbReference type="EMBL" id="AK145954">
    <property type="protein sequence ID" value="BAE26782.1"/>
    <property type="molecule type" value="mRNA"/>
</dbReference>
<dbReference type="EMBL" id="AK146384">
    <property type="protein sequence ID" value="BAE27129.1"/>
    <property type="molecule type" value="mRNA"/>
</dbReference>
<dbReference type="EMBL" id="AK146498">
    <property type="protein sequence ID" value="BAE27214.1"/>
    <property type="molecule type" value="mRNA"/>
</dbReference>
<dbReference type="EMBL" id="AK146598">
    <property type="protein sequence ID" value="BAE27292.1"/>
    <property type="molecule type" value="mRNA"/>
</dbReference>
<dbReference type="EMBL" id="AK146646">
    <property type="protein sequence ID" value="BAE27327.1"/>
    <property type="molecule type" value="mRNA"/>
</dbReference>
<dbReference type="EMBL" id="AK146649">
    <property type="protein sequence ID" value="BAE27329.1"/>
    <property type="molecule type" value="mRNA"/>
</dbReference>
<dbReference type="EMBL" id="AK147125">
    <property type="protein sequence ID" value="BAE27696.1"/>
    <property type="molecule type" value="mRNA"/>
</dbReference>
<dbReference type="EMBL" id="BC085086">
    <property type="protein sequence ID" value="AAH85086.1"/>
    <property type="molecule type" value="mRNA"/>
</dbReference>
<dbReference type="CCDS" id="CCDS36863.1"/>
<dbReference type="RefSeq" id="NP_001029160.1">
    <property type="nucleotide sequence ID" value="NM_001033988.3"/>
</dbReference>
<dbReference type="RefSeq" id="NP_001389932.1">
    <property type="nucleotide sequence ID" value="NM_001403003.1"/>
</dbReference>
<dbReference type="RefSeq" id="NP_062718.2">
    <property type="nucleotide sequence ID" value="NM_019744.5"/>
</dbReference>
<dbReference type="SMR" id="Q5U4H9"/>
<dbReference type="FunCoup" id="Q5U4H9">
    <property type="interactions" value="1019"/>
</dbReference>
<dbReference type="STRING" id="10090.ENSMUSP00000126071"/>
<dbReference type="iPTMnet" id="Q5U4H9"/>
<dbReference type="PhosphoSitePlus" id="Q5U4H9"/>
<dbReference type="PaxDb" id="10090-ENSMUSP00000126071"/>
<dbReference type="ProteomicsDB" id="343124"/>
<dbReference type="Antibodypedia" id="72715">
    <property type="antibodies" value="428 antibodies from 35 providers"/>
</dbReference>
<dbReference type="DNASU" id="27057"/>
<dbReference type="Ensembl" id="ENSMUST00000111994.10">
    <property type="protein sequence ID" value="ENSMUSP00000107625.4"/>
    <property type="gene ID" value="ENSMUSG00000056234.16"/>
</dbReference>
<dbReference type="Ensembl" id="ENSMUST00000163336.8">
    <property type="protein sequence ID" value="ENSMUSP00000126071.2"/>
    <property type="gene ID" value="ENSMUSG00000056234.16"/>
</dbReference>
<dbReference type="GeneID" id="27057"/>
<dbReference type="KEGG" id="mmu:27057"/>
<dbReference type="UCSC" id="uc007syj.2">
    <property type="organism name" value="mouse"/>
</dbReference>
<dbReference type="AGR" id="MGI:1350932"/>
<dbReference type="CTD" id="8031"/>
<dbReference type="MGI" id="MGI:1350932">
    <property type="gene designation" value="Ncoa4"/>
</dbReference>
<dbReference type="VEuPathDB" id="HostDB:ENSMUSG00000056234"/>
<dbReference type="eggNOG" id="ENOG502QQ6V">
    <property type="taxonomic scope" value="Eukaryota"/>
</dbReference>
<dbReference type="GeneTree" id="ENSGT00390000008403"/>
<dbReference type="HOGENOM" id="CLU_034170_0_0_1"/>
<dbReference type="OMA" id="FPPDCYG"/>
<dbReference type="OrthoDB" id="6334544at2759"/>
<dbReference type="TreeFam" id="TF333204"/>
<dbReference type="BioGRID-ORCS" id="27057">
    <property type="hits" value="7 hits in 81 CRISPR screens"/>
</dbReference>
<dbReference type="ChiTaRS" id="Ncoa4">
    <property type="organism name" value="mouse"/>
</dbReference>
<dbReference type="Proteomes" id="UP000000589">
    <property type="component" value="Chromosome 14"/>
</dbReference>
<dbReference type="RNAct" id="Q5U4H9">
    <property type="molecule type" value="protein"/>
</dbReference>
<dbReference type="Bgee" id="ENSMUSG00000056234">
    <property type="expression patterns" value="Expressed in spermatid and 68 other cell types or tissues"/>
</dbReference>
<dbReference type="ExpressionAtlas" id="Q5U4H9">
    <property type="expression patterns" value="baseline and differential"/>
</dbReference>
<dbReference type="GO" id="GO:0044754">
    <property type="term" value="C:autolysosome"/>
    <property type="evidence" value="ECO:0000266"/>
    <property type="project" value="MGI"/>
</dbReference>
<dbReference type="GO" id="GO:0005776">
    <property type="term" value="C:autophagosome"/>
    <property type="evidence" value="ECO:0007669"/>
    <property type="project" value="UniProtKB-SubCell"/>
</dbReference>
<dbReference type="GO" id="GO:0005694">
    <property type="term" value="C:chromosome"/>
    <property type="evidence" value="ECO:0007669"/>
    <property type="project" value="UniProtKB-SubCell"/>
</dbReference>
<dbReference type="GO" id="GO:0031410">
    <property type="term" value="C:cytoplasmic vesicle"/>
    <property type="evidence" value="ECO:0007669"/>
    <property type="project" value="UniProtKB-KW"/>
</dbReference>
<dbReference type="GO" id="GO:0005739">
    <property type="term" value="C:mitochondrion"/>
    <property type="evidence" value="ECO:0007005"/>
    <property type="project" value="MGI"/>
</dbReference>
<dbReference type="GO" id="GO:0005654">
    <property type="term" value="C:nucleoplasm"/>
    <property type="evidence" value="ECO:0000304"/>
    <property type="project" value="Reactome"/>
</dbReference>
<dbReference type="GO" id="GO:0003713">
    <property type="term" value="F:transcription coactivator activity"/>
    <property type="evidence" value="ECO:0007669"/>
    <property type="project" value="InterPro"/>
</dbReference>
<dbReference type="GO" id="GO:0006879">
    <property type="term" value="P:intracellular iron ion homeostasis"/>
    <property type="evidence" value="ECO:0000315"/>
    <property type="project" value="MGI"/>
</dbReference>
<dbReference type="GO" id="GO:0006622">
    <property type="term" value="P:protein targeting to lysosome"/>
    <property type="evidence" value="ECO:0000266"/>
    <property type="project" value="MGI"/>
</dbReference>
<dbReference type="GO" id="GO:0009725">
    <property type="term" value="P:response to hormone"/>
    <property type="evidence" value="ECO:0007669"/>
    <property type="project" value="Ensembl"/>
</dbReference>
<dbReference type="InterPro" id="IPR039947">
    <property type="entry name" value="NCoA-4"/>
</dbReference>
<dbReference type="InterPro" id="IPR022174">
    <property type="entry name" value="NCOA4_N"/>
</dbReference>
<dbReference type="PANTHER" id="PTHR17085">
    <property type="entry name" value="NUCLEAR RECEPTOR COACTIVATOR 4"/>
    <property type="match status" value="1"/>
</dbReference>
<dbReference type="PANTHER" id="PTHR17085:SF3">
    <property type="entry name" value="NUCLEAR RECEPTOR COACTIVATOR 4"/>
    <property type="match status" value="1"/>
</dbReference>
<dbReference type="Pfam" id="PF12489">
    <property type="entry name" value="ARA70"/>
    <property type="match status" value="2"/>
</dbReference>
<proteinExistence type="evidence at protein level"/>
<comment type="function">
    <text evidence="1 2 3 4 5">Cargo receptor for the autophagic turnover of the iron-binding ferritin complex, playing a central role in iron homeostasis (PubMed:24695223, PubMed:25327288, PubMed:26776506). Acts as an adapter for delivery of ferritin to lysosomes and autophagic degradation of ferritin, a process named ferritinophagy (PubMed:24695223, PubMed:26776506). Targets the iron-binding ferritin complex to autolysosomes following starvation or iron depletion (By similarity). Ensures efficient erythropoiesis, possibly by regulating hemin-induced erythroid differentiation (PubMed:26776506). In some studies, has been shown to enhance the androgen receptor AR transcriptional activity as well as acting as ligand-independent coactivator of the peroxisome proliferator-activated receptor (PPAR) gamma (By similarity). Another study shows only weak behavior as a coactivator for the androgen receptor and no alteration of the ligand responsiveness of the AR (By similarity). Binds to DNA replication origins, binding is not restricted to sites of active transcription and may likely be independent from the nuclear receptor transcriptional coactivator function (By similarity). May inhibit activation of DNA replication origins, possibly by obstructing DNA unwinding via interaction with the MCM2-7 complex (PubMed:24910095).</text>
</comment>
<comment type="subunit">
    <text evidence="1 2 3 5">Interacts with the ferritin complex, an oligomeric structure composed of varying combinations of ferritin heavy chains and ferritin light chains (By similarity). Interacts (via C-terminus) with ferritin heavy chain FTH1 (via 'Arg-23'); thereby targeting the iron-binding ferritin complex to autolysosomes following starvation or iron depletion (PubMed:24695223). Interacts with ferritin light chain FTL (PubMed:24695223). Interacts (via C-terminus) with ATG8-like proteins GABARAP and GABARAPL1; thereby mediating localization to autophagosomes and ferritinophagy (PubMed:24695223, PubMed:26776506). Interacts with MAP1LC3C/LC3C and GABARAPL2 (PubMed:24695223). Interacts with the androgen receptor AR (via NR DNA binding domain and NR LBD) in a ligand-dependent manner (By similarity). Interacts with the retinoid X receptor (RXR) in a ligand-dependent manner (By similarity). Interacts (via N-terminus) with MCM7 (PubMed:24910095). Interacts with MCM3 (By similarity). Interacts with CDC45 (By similarity).</text>
</comment>
<comment type="subcellular location">
    <subcellularLocation>
        <location evidence="2">Cytoplasmic vesicle</location>
        <location evidence="2">Autophagosome</location>
    </subcellularLocation>
    <subcellularLocation>
        <location evidence="1">Autolysosome</location>
    </subcellularLocation>
    <subcellularLocation>
        <location evidence="1">Nucleus</location>
    </subcellularLocation>
    <subcellularLocation>
        <location evidence="1">Chromosome</location>
    </subcellularLocation>
</comment>
<comment type="PTM">
    <text evidence="1">NCOA4 levels may be regulated via HERC2-mediated ubiquitination leading to proteosomal degradation; HERC2 association is dependent on NCOA4 iron occupancy.</text>
</comment>
<comment type="disruption phenotype">
    <text evidence="4 5">Exhibits profound accumulation of iron in splenic macrophages, which are critical for the reutilization of iron from engulfed red blood cells (PubMed:25327288). Hypersensitive to iron overload (PubMed:26776506). When fed an iron-enriched diet (2 g/kg), mice die prematurely and show signs of liver damage (PubMed:26776506). Ferritin accumulation in the liver, spleen and duodenum, increased levels of transferrin saturation, serum ferritin, and liver hepcidin, and decreased levels of duodenal ferroportin (PubMed:26776506). Defective iron mobilization from ferritin storage, inducing anemia (PubMed:26776506). Impaired ferritinophagy in embryonic fibroblasts (PubMed:26776506). Mild microcytic hypochromic anemia (PubMed:26776506). Under an iron-deprived diet (2-3 mg/kg), mice fail to release iron from ferritin storage and develop severe microcytic hypochromic anemia and ineffective erythropoiesis associated with increased erythropoietin levels (PubMed:26776506). Impaired erythropoiesis associated with microcytic and hypochromic anemia, which is more pronounced in mice fed an iron-depleted diet (PubMed:26776506).</text>
</comment>
<feature type="chain" id="PRO_0000460477" description="Nuclear receptor coactivator 4">
    <location>
        <begin position="1"/>
        <end position="625"/>
    </location>
</feature>
<feature type="region of interest" description="Interaction with ferritin heavy chain FTH1" evidence="1">
    <location>
        <begin position="394"/>
        <end position="533"/>
    </location>
</feature>
<feature type="sequence conflict" description="In Ref. 3; BAE26782." evidence="6" ref="3">
    <original>R</original>
    <variation>K</variation>
    <location>
        <position position="24"/>
    </location>
</feature>
<feature type="sequence conflict" description="In Ref. 3; BAE27292." evidence="6" ref="3">
    <original>L</original>
    <variation>P</variation>
    <location>
        <position position="214"/>
    </location>
</feature>
<feature type="sequence conflict" description="In Ref. 3; BAE26782." evidence="6" ref="3">
    <original>L</original>
    <variation>F</variation>
    <location>
        <position position="300"/>
    </location>
</feature>
<feature type="sequence conflict" description="In Ref. 3; BAE27696." evidence="6" ref="3">
    <original>N</original>
    <variation>S</variation>
    <location>
        <position position="346"/>
    </location>
</feature>
<feature type="sequence conflict" description="In Ref. 3; BAE27329." evidence="6" ref="3">
    <original>E</original>
    <variation>D</variation>
    <location>
        <position position="413"/>
    </location>
</feature>
<feature type="sequence conflict" description="In Ref. 3; AAD43136." evidence="6" ref="3">
    <original>K</original>
    <variation>E</variation>
    <location>
        <position position="450"/>
    </location>
</feature>
<feature type="sequence conflict" description="In Ref. 3; BAE27329." evidence="6" ref="3">
    <original>W</original>
    <variation>R</variation>
    <location>
        <position position="617"/>
    </location>
</feature>
<name>NCOA4_MOUSE</name>
<reference evidence="17" key="1">
    <citation type="journal article" date="2009" name="PLoS Biol.">
        <title>Lineage-specific biology revealed by a finished genome assembly of the mouse.</title>
        <authorList>
            <person name="Church D.M."/>
            <person name="Goodstadt L."/>
            <person name="Hillier L.W."/>
            <person name="Zody M.C."/>
            <person name="Goldstein S."/>
            <person name="She X."/>
            <person name="Bult C.J."/>
            <person name="Agarwala R."/>
            <person name="Cherry J.L."/>
            <person name="DiCuccio M."/>
            <person name="Hlavina W."/>
            <person name="Kapustin Y."/>
            <person name="Meric P."/>
            <person name="Maglott D."/>
            <person name="Birtle Z."/>
            <person name="Marques A.C."/>
            <person name="Graves T."/>
            <person name="Zhou S."/>
            <person name="Teague B."/>
            <person name="Potamousis K."/>
            <person name="Churas C."/>
            <person name="Place M."/>
            <person name="Herschleb J."/>
            <person name="Runnheim R."/>
            <person name="Forrest D."/>
            <person name="Amos-Landgraf J."/>
            <person name="Schwartz D.C."/>
            <person name="Cheng Z."/>
            <person name="Lindblad-Toh K."/>
            <person name="Eichler E.E."/>
            <person name="Ponting C.P."/>
        </authorList>
    </citation>
    <scope>NUCLEOTIDE SEQUENCE [LARGE SCALE GENOMIC DNA]</scope>
    <source>
        <strain evidence="17">C57BL/6J</strain>
    </source>
</reference>
<reference evidence="8" key="2">
    <citation type="journal article" date="2004" name="Genome Res.">
        <title>The status, quality, and expansion of the NIH full-length cDNA project: the Mammalian Gene Collection (MGC).</title>
        <authorList>
            <consortium name="The MGC Project Team"/>
        </authorList>
    </citation>
    <scope>NUCLEOTIDE SEQUENCE [LARGE SCALE MRNA]</scope>
    <source>
        <tissue evidence="8">Embryo</tissue>
    </source>
</reference>
<reference evidence="10" key="3">
    <citation type="journal article" date="2005" name="Science">
        <title>The transcriptional landscape of the mammalian genome.</title>
        <authorList>
            <person name="Carninci P."/>
            <person name="Kasukawa T."/>
            <person name="Katayama S."/>
            <person name="Gough J."/>
            <person name="Frith M.C."/>
            <person name="Maeda N."/>
            <person name="Oyama R."/>
            <person name="Ravasi T."/>
            <person name="Lenhard B."/>
            <person name="Wells C."/>
            <person name="Kodzius R."/>
            <person name="Shimokawa K."/>
            <person name="Bajic V.B."/>
            <person name="Brenner S.E."/>
            <person name="Batalov S."/>
            <person name="Forrest A.R."/>
            <person name="Zavolan M."/>
            <person name="Davis M.J."/>
            <person name="Wilming L.G."/>
            <person name="Aidinis V."/>
            <person name="Allen J.E."/>
            <person name="Ambesi-Impiombato A."/>
            <person name="Apweiler R."/>
            <person name="Aturaliya R.N."/>
            <person name="Bailey T.L."/>
            <person name="Bansal M."/>
            <person name="Baxter L."/>
            <person name="Beisel K.W."/>
            <person name="Bersano T."/>
            <person name="Bono H."/>
            <person name="Chalk A.M."/>
            <person name="Chiu K.P."/>
            <person name="Choudhary V."/>
            <person name="Christoffels A."/>
            <person name="Clutterbuck D.R."/>
            <person name="Crowe M.L."/>
            <person name="Dalla E."/>
            <person name="Dalrymple B.P."/>
            <person name="de Bono B."/>
            <person name="Della Gatta G."/>
            <person name="di Bernardo D."/>
            <person name="Down T."/>
            <person name="Engstrom P."/>
            <person name="Fagiolini M."/>
            <person name="Faulkner G."/>
            <person name="Fletcher C.F."/>
            <person name="Fukushima T."/>
            <person name="Furuno M."/>
            <person name="Futaki S."/>
            <person name="Gariboldi M."/>
            <person name="Georgii-Hemming P."/>
            <person name="Gingeras T.R."/>
            <person name="Gojobori T."/>
            <person name="Green R.E."/>
            <person name="Gustincich S."/>
            <person name="Harbers M."/>
            <person name="Hayashi Y."/>
            <person name="Hensch T.K."/>
            <person name="Hirokawa N."/>
            <person name="Hill D."/>
            <person name="Huminiecki L."/>
            <person name="Iacono M."/>
            <person name="Ikeo K."/>
            <person name="Iwama A."/>
            <person name="Ishikawa T."/>
            <person name="Jakt M."/>
            <person name="Kanapin A."/>
            <person name="Katoh M."/>
            <person name="Kawasawa Y."/>
            <person name="Kelso J."/>
            <person name="Kitamura H."/>
            <person name="Kitano H."/>
            <person name="Kollias G."/>
            <person name="Krishnan S.P."/>
            <person name="Kruger A."/>
            <person name="Kummerfeld S.K."/>
            <person name="Kurochkin I.V."/>
            <person name="Lareau L.F."/>
            <person name="Lazarevic D."/>
            <person name="Lipovich L."/>
            <person name="Liu J."/>
            <person name="Liuni S."/>
            <person name="McWilliam S."/>
            <person name="Madan Babu M."/>
            <person name="Madera M."/>
            <person name="Marchionni L."/>
            <person name="Matsuda H."/>
            <person name="Matsuzawa S."/>
            <person name="Miki H."/>
            <person name="Mignone F."/>
            <person name="Miyake S."/>
            <person name="Morris K."/>
            <person name="Mottagui-Tabar S."/>
            <person name="Mulder N."/>
            <person name="Nakano N."/>
            <person name="Nakauchi H."/>
            <person name="Ng P."/>
            <person name="Nilsson R."/>
            <person name="Nishiguchi S."/>
            <person name="Nishikawa S."/>
            <person name="Nori F."/>
            <person name="Ohara O."/>
            <person name="Okazaki Y."/>
            <person name="Orlando V."/>
            <person name="Pang K.C."/>
            <person name="Pavan W.J."/>
            <person name="Pavesi G."/>
            <person name="Pesole G."/>
            <person name="Petrovsky N."/>
            <person name="Piazza S."/>
            <person name="Reed J."/>
            <person name="Reid J.F."/>
            <person name="Ring B.Z."/>
            <person name="Ringwald M."/>
            <person name="Rost B."/>
            <person name="Ruan Y."/>
            <person name="Salzberg S.L."/>
            <person name="Sandelin A."/>
            <person name="Schneider C."/>
            <person name="Schoenbach C."/>
            <person name="Sekiguchi K."/>
            <person name="Semple C.A."/>
            <person name="Seno S."/>
            <person name="Sessa L."/>
            <person name="Sheng Y."/>
            <person name="Shibata Y."/>
            <person name="Shimada H."/>
            <person name="Shimada K."/>
            <person name="Silva D."/>
            <person name="Sinclair B."/>
            <person name="Sperling S."/>
            <person name="Stupka E."/>
            <person name="Sugiura K."/>
            <person name="Sultana R."/>
            <person name="Takenaka Y."/>
            <person name="Taki K."/>
            <person name="Tammoja K."/>
            <person name="Tan S.L."/>
            <person name="Tang S."/>
            <person name="Taylor M.S."/>
            <person name="Tegner J."/>
            <person name="Teichmann S.A."/>
            <person name="Ueda H.R."/>
            <person name="van Nimwegen E."/>
            <person name="Verardo R."/>
            <person name="Wei C.L."/>
            <person name="Yagi K."/>
            <person name="Yamanishi H."/>
            <person name="Zabarovsky E."/>
            <person name="Zhu S."/>
            <person name="Zimmer A."/>
            <person name="Hide W."/>
            <person name="Bult C."/>
            <person name="Grimmond S.M."/>
            <person name="Teasdale R.D."/>
            <person name="Liu E.T."/>
            <person name="Brusic V."/>
            <person name="Quackenbush J."/>
            <person name="Wahlestedt C."/>
            <person name="Mattick J.S."/>
            <person name="Hume D.A."/>
            <person name="Kai C."/>
            <person name="Sasaki D."/>
            <person name="Tomaru Y."/>
            <person name="Fukuda S."/>
            <person name="Kanamori-Katayama M."/>
            <person name="Suzuki M."/>
            <person name="Aoki J."/>
            <person name="Arakawa T."/>
            <person name="Iida J."/>
            <person name="Imamura K."/>
            <person name="Itoh M."/>
            <person name="Kato T."/>
            <person name="Kawaji H."/>
            <person name="Kawagashira N."/>
            <person name="Kawashima T."/>
            <person name="Kojima M."/>
            <person name="Kondo S."/>
            <person name="Konno H."/>
            <person name="Nakano K."/>
            <person name="Ninomiya N."/>
            <person name="Nishio T."/>
            <person name="Okada M."/>
            <person name="Plessy C."/>
            <person name="Shibata K."/>
            <person name="Shiraki T."/>
            <person name="Suzuki S."/>
            <person name="Tagami M."/>
            <person name="Waki K."/>
            <person name="Watahiki A."/>
            <person name="Okamura-Oho Y."/>
            <person name="Suzuki H."/>
            <person name="Kawai J."/>
            <person name="Hayashizaki Y."/>
        </authorList>
    </citation>
    <scope>NUCLEOTIDE SEQUENCE [LARGE SCALE MRNA]</scope>
    <source>
        <strain evidence="10 11 14 15">BALB/cJ</strain>
        <strain evidence="9">C57BL/6J</strain>
        <tissue evidence="12">Amnion</tissue>
        <tissue evidence="13 15">Kidney</tissue>
        <tissue evidence="10">Liver</tissue>
        <tissue evidence="9">Placenta</tissue>
    </source>
</reference>
<reference evidence="6" key="4">
    <citation type="journal article" date="2014" name="Mol. Cell">
        <title>NCOA4 transcriptional coactivator inhibits activation of DNA replication origins.</title>
        <authorList>
            <person name="Bellelli R."/>
            <person name="Castellone M.D."/>
            <person name="Guida T."/>
            <person name="Limongello R."/>
            <person name="Dathan N.A."/>
            <person name="Merolla F."/>
            <person name="Cirafici A.M."/>
            <person name="Affuso A."/>
            <person name="Masai H."/>
            <person name="Costanzo V."/>
            <person name="Grieco D."/>
            <person name="Fusco A."/>
            <person name="Santoro M."/>
            <person name="Carlomagno F."/>
        </authorList>
    </citation>
    <scope>FUNCTION</scope>
    <scope>INTERACTION WITH MCM7</scope>
</reference>
<reference evidence="6" key="5">
    <citation type="journal article" date="2014" name="Nature">
        <title>Quantitative proteomics identifies NCOA4 as the cargo receptor mediating ferritinophagy.</title>
        <authorList>
            <person name="Mancias J.D."/>
            <person name="Wang X."/>
            <person name="Gygi S.P."/>
            <person name="Harper J.W."/>
            <person name="Kimmelman A.C."/>
        </authorList>
    </citation>
    <scope>FUNCTION</scope>
    <scope>SUBCELLULAR LOCATION</scope>
    <scope>INTERACTION WITH FTH1; FTL; MAP1LC3C/LC3C; GABARAP; GABARAPL1 AND GABARAPL2</scope>
</reference>
<reference evidence="6" key="6">
    <citation type="journal article" date="2014" name="Nat. Cell Biol.">
        <title>Selective VPS34 inhibitor blocks autophagy and uncovers a role for NCOA4 in ferritin degradation and iron homeostasis in vivo.</title>
        <authorList>
            <person name="Dowdle W.E."/>
            <person name="Nyfeler B."/>
            <person name="Nagel J."/>
            <person name="Elling R.A."/>
            <person name="Liu S."/>
            <person name="Triantafellow E."/>
            <person name="Menon S."/>
            <person name="Wang Z."/>
            <person name="Honda A."/>
            <person name="Pardee G."/>
            <person name="Cantwell J."/>
            <person name="Luu C."/>
            <person name="Cornella-Taracido I."/>
            <person name="Harrington E."/>
            <person name="Fekkes P."/>
            <person name="Lei H."/>
            <person name="Fang Q."/>
            <person name="Digan M.E."/>
            <person name="Burdick D."/>
            <person name="Powers A.F."/>
            <person name="Helliwell S.B."/>
            <person name="D'Aquin S."/>
            <person name="Bastien J."/>
            <person name="Wang H."/>
            <person name="Wiederschain D."/>
            <person name="Kuerth J."/>
            <person name="Bergman P."/>
            <person name="Schwalb D."/>
            <person name="Thomas J."/>
            <person name="Ugwonali S."/>
            <person name="Harbinski F."/>
            <person name="Tallarico J."/>
            <person name="Wilson C.J."/>
            <person name="Myer V.E."/>
            <person name="Porter J.A."/>
            <person name="Bussiere D.E."/>
            <person name="Finan P.M."/>
            <person name="Labow M.A."/>
            <person name="Mao X."/>
            <person name="Hamann L.G."/>
            <person name="Manning B.D."/>
            <person name="Valdez R.A."/>
            <person name="Nicholson T."/>
            <person name="Schirle M."/>
            <person name="Knapp M.S."/>
            <person name="Keaney E.P."/>
            <person name="Murphy L.O."/>
        </authorList>
    </citation>
    <scope>FUNCTION</scope>
    <scope>DISRUPTION PHENOTYPE</scope>
</reference>
<reference evidence="6" key="7">
    <citation type="journal article" date="2016" name="Cell Rep.">
        <title>NCOA4 Deficiency Impairs Systemic Iron Homeostasis.</title>
        <authorList>
            <person name="Bellelli R."/>
            <person name="Federico G."/>
            <person name="Matte' A."/>
            <person name="Colecchia D."/>
            <person name="Iolascon A."/>
            <person name="Chiariello M."/>
            <person name="Santoro M."/>
            <person name="De Franceschi L."/>
            <person name="Carlomagno F."/>
        </authorList>
    </citation>
    <scope>FUNCTION</scope>
    <scope>INTERACTION WITH GABARAP AND GABARAPL1</scope>
    <scope>DISRUPTION PHENOTYPE</scope>
</reference>